<evidence type="ECO:0000250" key="1"/>
<evidence type="ECO:0000255" key="2"/>
<evidence type="ECO:0000255" key="3">
    <source>
        <dbReference type="PROSITE-ProRule" id="PRU10001"/>
    </source>
</evidence>
<evidence type="ECO:0000305" key="4"/>
<dbReference type="EC" id="1.1.1.-"/>
<dbReference type="EMBL" id="AB023037">
    <property type="protein sequence ID" value="BAA96990.1"/>
    <property type="molecule type" value="Genomic_DNA"/>
</dbReference>
<dbReference type="EMBL" id="CP002688">
    <property type="protein sequence ID" value="AED95990.1"/>
    <property type="molecule type" value="Genomic_DNA"/>
</dbReference>
<dbReference type="EMBL" id="BT020525">
    <property type="protein sequence ID" value="AAW49294.1"/>
    <property type="molecule type" value="mRNA"/>
</dbReference>
<dbReference type="RefSeq" id="NP_199890.1">
    <property type="nucleotide sequence ID" value="NM_124455.2"/>
</dbReference>
<dbReference type="SMR" id="Q9LUE4"/>
<dbReference type="FunCoup" id="Q9LUE4">
    <property type="interactions" value="121"/>
</dbReference>
<dbReference type="STRING" id="3702.Q9LUE4"/>
<dbReference type="PaxDb" id="3702-AT5G50770.1"/>
<dbReference type="ProteomicsDB" id="232109"/>
<dbReference type="EnsemblPlants" id="AT5G50770.1">
    <property type="protein sequence ID" value="AT5G50770.1"/>
    <property type="gene ID" value="AT5G50770"/>
</dbReference>
<dbReference type="GeneID" id="835149"/>
<dbReference type="Gramene" id="AT5G50770.1">
    <property type="protein sequence ID" value="AT5G50770.1"/>
    <property type="gene ID" value="AT5G50770"/>
</dbReference>
<dbReference type="KEGG" id="ath:AT5G50770"/>
<dbReference type="Araport" id="AT5G50770"/>
<dbReference type="TAIR" id="AT5G50770">
    <property type="gene designation" value="HSD6"/>
</dbReference>
<dbReference type="eggNOG" id="KOG1205">
    <property type="taxonomic scope" value="Eukaryota"/>
</dbReference>
<dbReference type="HOGENOM" id="CLU_010194_2_1_1"/>
<dbReference type="InParanoid" id="Q9LUE4"/>
<dbReference type="OMA" id="CASIMAR"/>
<dbReference type="PhylomeDB" id="Q9LUE4"/>
<dbReference type="PRO" id="PR:Q9LUE4"/>
<dbReference type="Proteomes" id="UP000006548">
    <property type="component" value="Chromosome 5"/>
</dbReference>
<dbReference type="ExpressionAtlas" id="Q9LUE4">
    <property type="expression patterns" value="baseline and differential"/>
</dbReference>
<dbReference type="GO" id="GO:0016020">
    <property type="term" value="C:membrane"/>
    <property type="evidence" value="ECO:0007669"/>
    <property type="project" value="UniProtKB-SubCell"/>
</dbReference>
<dbReference type="GO" id="GO:0016491">
    <property type="term" value="F:oxidoreductase activity"/>
    <property type="evidence" value="ECO:0007669"/>
    <property type="project" value="UniProtKB-KW"/>
</dbReference>
<dbReference type="GO" id="GO:0006694">
    <property type="term" value="P:steroid biosynthetic process"/>
    <property type="evidence" value="ECO:0007669"/>
    <property type="project" value="UniProtKB-KW"/>
</dbReference>
<dbReference type="Gene3D" id="3.40.50.720">
    <property type="entry name" value="NAD(P)-binding Rossmann-like Domain"/>
    <property type="match status" value="1"/>
</dbReference>
<dbReference type="InterPro" id="IPR036291">
    <property type="entry name" value="NAD(P)-bd_dom_sf"/>
</dbReference>
<dbReference type="InterPro" id="IPR020904">
    <property type="entry name" value="Sc_DH/Rdtase_CS"/>
</dbReference>
<dbReference type="InterPro" id="IPR002347">
    <property type="entry name" value="SDR_fam"/>
</dbReference>
<dbReference type="PANTHER" id="PTHR43391:SF69">
    <property type="entry name" value="11-BETA-HYDROXYSTEROID DEHYDROGENASE-LIKE 6"/>
    <property type="match status" value="1"/>
</dbReference>
<dbReference type="PANTHER" id="PTHR43391">
    <property type="entry name" value="RETINOL DEHYDROGENASE-RELATED"/>
    <property type="match status" value="1"/>
</dbReference>
<dbReference type="Pfam" id="PF00106">
    <property type="entry name" value="adh_short"/>
    <property type="match status" value="1"/>
</dbReference>
<dbReference type="PRINTS" id="PR00081">
    <property type="entry name" value="GDHRDH"/>
</dbReference>
<dbReference type="PRINTS" id="PR00080">
    <property type="entry name" value="SDRFAMILY"/>
</dbReference>
<dbReference type="SUPFAM" id="SSF51735">
    <property type="entry name" value="NAD(P)-binding Rossmann-fold domains"/>
    <property type="match status" value="1"/>
</dbReference>
<dbReference type="PROSITE" id="PS00061">
    <property type="entry name" value="ADH_SHORT"/>
    <property type="match status" value="1"/>
</dbReference>
<organism>
    <name type="scientific">Arabidopsis thaliana</name>
    <name type="common">Mouse-ear cress</name>
    <dbReference type="NCBI Taxonomy" id="3702"/>
    <lineage>
        <taxon>Eukaryota</taxon>
        <taxon>Viridiplantae</taxon>
        <taxon>Streptophyta</taxon>
        <taxon>Embryophyta</taxon>
        <taxon>Tracheophyta</taxon>
        <taxon>Spermatophyta</taxon>
        <taxon>Magnoliopsida</taxon>
        <taxon>eudicotyledons</taxon>
        <taxon>Gunneridae</taxon>
        <taxon>Pentapetalae</taxon>
        <taxon>rosids</taxon>
        <taxon>malvids</taxon>
        <taxon>Brassicales</taxon>
        <taxon>Brassicaceae</taxon>
        <taxon>Camelineae</taxon>
        <taxon>Arabidopsis</taxon>
    </lineage>
</organism>
<keyword id="KW-0444">Lipid biosynthesis</keyword>
<keyword id="KW-0443">Lipid metabolism</keyword>
<keyword id="KW-0472">Membrane</keyword>
<keyword id="KW-0521">NADP</keyword>
<keyword id="KW-0560">Oxidoreductase</keyword>
<keyword id="KW-1185">Reference proteome</keyword>
<keyword id="KW-0735">Signal-anchor</keyword>
<keyword id="KW-0752">Steroid biosynthesis</keyword>
<keyword id="KW-0812">Transmembrane</keyword>
<keyword id="KW-1133">Transmembrane helix</keyword>
<proteinExistence type="evidence at transcript level"/>
<sequence length="342" mass="37993">MDSINKIINFLFPLLTLYALLVFYPTYQRLKSAVSICRNLFSENVAGKVVVITGAASGIGEALAYEYGKRGAYLALVDIRGEPLFHVAALAELYGSPEVLPLVADVSKLQDCERFIRATVLHFGRLDHLVTNAGVAPLYFFADIEDVSKASPAMDINFWGSVYCTFFASPYLKKFRGRIVVIASGCGYIASPRLSFYCASKAAVIAFYETLRTEFGSDIGVTIVAPGIVDSEMSRGKFMTKDGKLVVDKELRDVQMSVLPVESAERCAKAIMRSVCRGDRYLLEPDWIGCVILLKVFCSEATEWVARWLLIARPKFPMMEALSNKILDVAHAFNSFFSFPHY</sequence>
<gene>
    <name type="primary">HSD6</name>
    <name type="ordered locus">At5g50770</name>
    <name type="ORF">MFB16.17</name>
</gene>
<accession>Q9LUE4</accession>
<comment type="subcellular location">
    <subcellularLocation>
        <location evidence="4">Membrane</location>
        <topology evidence="4">Single-pass type II membrane protein</topology>
    </subcellularLocation>
</comment>
<comment type="similarity">
    <text evidence="4">Belongs to the short-chain dehydrogenases/reductases (SDR) family.</text>
</comment>
<protein>
    <recommendedName>
        <fullName>11-beta-hydroxysteroid dehydrogenase-like 6</fullName>
        <ecNumber>1.1.1.-</ecNumber>
    </recommendedName>
    <alternativeName>
        <fullName>17-beta-hydroxysteroid dehydrogenase-like 6</fullName>
        <ecNumber>1.1.1.-</ecNumber>
    </alternativeName>
    <alternativeName>
        <fullName>Hydroxysteroid dehydrogenase 6</fullName>
        <shortName>AtHSD6</shortName>
    </alternativeName>
</protein>
<reference key="1">
    <citation type="journal article" date="2000" name="DNA Res.">
        <title>Structural analysis of Arabidopsis thaliana chromosome 5. X. Sequence features of the regions of 3,076,755 bp covered by sixty P1 and TAC clones.</title>
        <authorList>
            <person name="Sato S."/>
            <person name="Nakamura Y."/>
            <person name="Kaneko T."/>
            <person name="Katoh T."/>
            <person name="Asamizu E."/>
            <person name="Kotani H."/>
            <person name="Tabata S."/>
        </authorList>
    </citation>
    <scope>NUCLEOTIDE SEQUENCE [LARGE SCALE GENOMIC DNA]</scope>
    <source>
        <strain>cv. Columbia</strain>
    </source>
</reference>
<reference key="2">
    <citation type="journal article" date="2017" name="Plant J.">
        <title>Araport11: a complete reannotation of the Arabidopsis thaliana reference genome.</title>
        <authorList>
            <person name="Cheng C.Y."/>
            <person name="Krishnakumar V."/>
            <person name="Chan A.P."/>
            <person name="Thibaud-Nissen F."/>
            <person name="Schobel S."/>
            <person name="Town C.D."/>
        </authorList>
    </citation>
    <scope>GENOME REANNOTATION</scope>
    <source>
        <strain>cv. Columbia</strain>
    </source>
</reference>
<reference key="3">
    <citation type="submission" date="2005-01" db="EMBL/GenBank/DDBJ databases">
        <title>Arabidopsis cDNA clones.</title>
        <authorList>
            <person name="Shinn P."/>
            <person name="Chen H."/>
            <person name="Cheuk R."/>
            <person name="Kim C.J."/>
            <person name="Ecker J.R."/>
        </authorList>
    </citation>
    <scope>NUCLEOTIDE SEQUENCE [LARGE SCALE MRNA]</scope>
    <source>
        <strain>cv. Columbia</strain>
    </source>
</reference>
<reference key="4">
    <citation type="journal article" date="2007" name="Plant Physiol.">
        <title>A putative hydroxysteroid dehydrogenase involved in regulating plant growth and development.</title>
        <authorList>
            <person name="Li F."/>
            <person name="Asami T."/>
            <person name="Wu X."/>
            <person name="Tsang E.W."/>
            <person name="Cutler A.J."/>
        </authorList>
    </citation>
    <scope>GENE FAMILY</scope>
</reference>
<reference key="5">
    <citation type="journal article" date="2009" name="Plant Cell Physiol.">
        <title>Regulation of HSD1 in seeds of Arabidopsis thaliana.</title>
        <authorList>
            <person name="Baud S."/>
            <person name="Dichow N.R."/>
            <person name="Kelemen Z."/>
            <person name="d'Andrea S."/>
            <person name="To A."/>
            <person name="Berger N."/>
            <person name="Canonge M."/>
            <person name="Kronenberger J."/>
            <person name="Viterbo D."/>
            <person name="Dubreucq B."/>
            <person name="Lepiniec L."/>
            <person name="Chardot T."/>
            <person name="Miquel M."/>
        </authorList>
    </citation>
    <scope>GENE FAMILY</scope>
</reference>
<feature type="chain" id="PRO_0000422285" description="11-beta-hydroxysteroid dehydrogenase-like 6">
    <location>
        <begin position="1"/>
        <end position="342"/>
    </location>
</feature>
<feature type="transmembrane region" description="Helical; Signal-anchor for type II membrane protein" evidence="2">
    <location>
        <begin position="10"/>
        <end position="30"/>
    </location>
</feature>
<feature type="active site" description="Proton acceptor" evidence="3">
    <location>
        <position position="197"/>
    </location>
</feature>
<feature type="binding site" evidence="1">
    <location>
        <begin position="54"/>
        <end position="80"/>
    </location>
    <ligand>
        <name>NADP(+)</name>
        <dbReference type="ChEBI" id="CHEBI:58349"/>
    </ligand>
</feature>
<feature type="binding site" evidence="1">
    <location>
        <position position="105"/>
    </location>
    <ligand>
        <name>NADP(+)</name>
        <dbReference type="ChEBI" id="CHEBI:58349"/>
    </ligand>
</feature>
<feature type="binding site" evidence="1">
    <location>
        <position position="184"/>
    </location>
    <ligand>
        <name>substrate</name>
    </ligand>
</feature>
<feature type="binding site" evidence="1">
    <location>
        <begin position="197"/>
        <end position="201"/>
    </location>
    <ligand>
        <name>NADP(+)</name>
        <dbReference type="ChEBI" id="CHEBI:58349"/>
    </ligand>
</feature>
<feature type="binding site" evidence="1">
    <location>
        <position position="201"/>
    </location>
    <ligand>
        <name>NADP(+)</name>
        <dbReference type="ChEBI" id="CHEBI:58349"/>
    </ligand>
</feature>
<name>HSD6_ARATH</name>